<proteinExistence type="inferred from homology"/>
<dbReference type="EC" id="3.4.24.-" evidence="1"/>
<dbReference type="EMBL" id="AM746676">
    <property type="protein sequence ID" value="CAN90574.1"/>
    <property type="molecule type" value="Genomic_DNA"/>
</dbReference>
<dbReference type="RefSeq" id="WP_012233052.1">
    <property type="nucleotide sequence ID" value="NC_010162.1"/>
</dbReference>
<dbReference type="SMR" id="A9GRC9"/>
<dbReference type="STRING" id="448385.sce0417"/>
<dbReference type="KEGG" id="scl:sce0417"/>
<dbReference type="eggNOG" id="COG0465">
    <property type="taxonomic scope" value="Bacteria"/>
</dbReference>
<dbReference type="HOGENOM" id="CLU_000688_16_2_7"/>
<dbReference type="OrthoDB" id="9809379at2"/>
<dbReference type="BioCyc" id="SCEL448385:SCE_RS02195-MONOMER"/>
<dbReference type="Proteomes" id="UP000002139">
    <property type="component" value="Chromosome"/>
</dbReference>
<dbReference type="GO" id="GO:0005886">
    <property type="term" value="C:plasma membrane"/>
    <property type="evidence" value="ECO:0007669"/>
    <property type="project" value="UniProtKB-SubCell"/>
</dbReference>
<dbReference type="GO" id="GO:0005524">
    <property type="term" value="F:ATP binding"/>
    <property type="evidence" value="ECO:0007669"/>
    <property type="project" value="UniProtKB-UniRule"/>
</dbReference>
<dbReference type="GO" id="GO:0016887">
    <property type="term" value="F:ATP hydrolysis activity"/>
    <property type="evidence" value="ECO:0007669"/>
    <property type="project" value="UniProtKB-UniRule"/>
</dbReference>
<dbReference type="GO" id="GO:0004176">
    <property type="term" value="F:ATP-dependent peptidase activity"/>
    <property type="evidence" value="ECO:0007669"/>
    <property type="project" value="InterPro"/>
</dbReference>
<dbReference type="GO" id="GO:0004222">
    <property type="term" value="F:metalloendopeptidase activity"/>
    <property type="evidence" value="ECO:0007669"/>
    <property type="project" value="InterPro"/>
</dbReference>
<dbReference type="GO" id="GO:0008270">
    <property type="term" value="F:zinc ion binding"/>
    <property type="evidence" value="ECO:0007669"/>
    <property type="project" value="UniProtKB-UniRule"/>
</dbReference>
<dbReference type="GO" id="GO:0030163">
    <property type="term" value="P:protein catabolic process"/>
    <property type="evidence" value="ECO:0007669"/>
    <property type="project" value="UniProtKB-UniRule"/>
</dbReference>
<dbReference type="GO" id="GO:0006508">
    <property type="term" value="P:proteolysis"/>
    <property type="evidence" value="ECO:0007669"/>
    <property type="project" value="UniProtKB-KW"/>
</dbReference>
<dbReference type="CDD" id="cd19501">
    <property type="entry name" value="RecA-like_FtsH"/>
    <property type="match status" value="1"/>
</dbReference>
<dbReference type="FunFam" id="1.10.8.60:FF:000001">
    <property type="entry name" value="ATP-dependent zinc metalloprotease FtsH"/>
    <property type="match status" value="1"/>
</dbReference>
<dbReference type="FunFam" id="1.20.58.760:FF:000001">
    <property type="entry name" value="ATP-dependent zinc metalloprotease FtsH"/>
    <property type="match status" value="1"/>
</dbReference>
<dbReference type="FunFam" id="3.40.50.300:FF:000001">
    <property type="entry name" value="ATP-dependent zinc metalloprotease FtsH"/>
    <property type="match status" value="1"/>
</dbReference>
<dbReference type="Gene3D" id="1.10.8.60">
    <property type="match status" value="1"/>
</dbReference>
<dbReference type="Gene3D" id="3.30.720.210">
    <property type="match status" value="1"/>
</dbReference>
<dbReference type="Gene3D" id="3.40.50.300">
    <property type="entry name" value="P-loop containing nucleotide triphosphate hydrolases"/>
    <property type="match status" value="1"/>
</dbReference>
<dbReference type="Gene3D" id="1.20.58.760">
    <property type="entry name" value="Peptidase M41"/>
    <property type="match status" value="1"/>
</dbReference>
<dbReference type="HAMAP" id="MF_01458">
    <property type="entry name" value="FtsH"/>
    <property type="match status" value="1"/>
</dbReference>
<dbReference type="InterPro" id="IPR003593">
    <property type="entry name" value="AAA+_ATPase"/>
</dbReference>
<dbReference type="InterPro" id="IPR041569">
    <property type="entry name" value="AAA_lid_3"/>
</dbReference>
<dbReference type="InterPro" id="IPR003959">
    <property type="entry name" value="ATPase_AAA_core"/>
</dbReference>
<dbReference type="InterPro" id="IPR003960">
    <property type="entry name" value="ATPase_AAA_CS"/>
</dbReference>
<dbReference type="InterPro" id="IPR005936">
    <property type="entry name" value="FtsH"/>
</dbReference>
<dbReference type="InterPro" id="IPR027417">
    <property type="entry name" value="P-loop_NTPase"/>
</dbReference>
<dbReference type="InterPro" id="IPR000642">
    <property type="entry name" value="Peptidase_M41"/>
</dbReference>
<dbReference type="InterPro" id="IPR037219">
    <property type="entry name" value="Peptidase_M41-like"/>
</dbReference>
<dbReference type="NCBIfam" id="TIGR01241">
    <property type="entry name" value="FtsH_fam"/>
    <property type="match status" value="1"/>
</dbReference>
<dbReference type="PANTHER" id="PTHR23076:SF97">
    <property type="entry name" value="ATP-DEPENDENT ZINC METALLOPROTEASE YME1L1"/>
    <property type="match status" value="1"/>
</dbReference>
<dbReference type="PANTHER" id="PTHR23076">
    <property type="entry name" value="METALLOPROTEASE M41 FTSH"/>
    <property type="match status" value="1"/>
</dbReference>
<dbReference type="Pfam" id="PF00004">
    <property type="entry name" value="AAA"/>
    <property type="match status" value="1"/>
</dbReference>
<dbReference type="Pfam" id="PF17862">
    <property type="entry name" value="AAA_lid_3"/>
    <property type="match status" value="1"/>
</dbReference>
<dbReference type="Pfam" id="PF01434">
    <property type="entry name" value="Peptidase_M41"/>
    <property type="match status" value="1"/>
</dbReference>
<dbReference type="SMART" id="SM00382">
    <property type="entry name" value="AAA"/>
    <property type="match status" value="1"/>
</dbReference>
<dbReference type="SUPFAM" id="SSF140990">
    <property type="entry name" value="FtsH protease domain-like"/>
    <property type="match status" value="1"/>
</dbReference>
<dbReference type="SUPFAM" id="SSF52540">
    <property type="entry name" value="P-loop containing nucleoside triphosphate hydrolases"/>
    <property type="match status" value="1"/>
</dbReference>
<dbReference type="PROSITE" id="PS00674">
    <property type="entry name" value="AAA"/>
    <property type="match status" value="1"/>
</dbReference>
<evidence type="ECO:0000255" key="1">
    <source>
        <dbReference type="HAMAP-Rule" id="MF_01458"/>
    </source>
</evidence>
<gene>
    <name evidence="1" type="primary">ftsH1</name>
    <name type="ordered locus">sce0417</name>
</gene>
<feature type="chain" id="PRO_0000400394" description="ATP-dependent zinc metalloprotease FtsH 1">
    <location>
        <begin position="1"/>
        <end position="619"/>
    </location>
</feature>
<feature type="topological domain" description="Cytoplasmic" evidence="1">
    <location>
        <begin position="1"/>
        <end position="8"/>
    </location>
</feature>
<feature type="transmembrane region" description="Helical" evidence="1">
    <location>
        <begin position="9"/>
        <end position="29"/>
    </location>
</feature>
<feature type="topological domain" description="Periplasmic" evidence="1">
    <location>
        <begin position="30"/>
        <end position="108"/>
    </location>
</feature>
<feature type="transmembrane region" description="Helical" evidence="1">
    <location>
        <begin position="109"/>
        <end position="129"/>
    </location>
</feature>
<feature type="topological domain" description="Cytoplasmic" evidence="1">
    <location>
        <begin position="130"/>
        <end position="619"/>
    </location>
</feature>
<feature type="active site" evidence="1">
    <location>
        <position position="427"/>
    </location>
</feature>
<feature type="binding site" evidence="1">
    <location>
        <begin position="203"/>
        <end position="210"/>
    </location>
    <ligand>
        <name>ATP</name>
        <dbReference type="ChEBI" id="CHEBI:30616"/>
    </ligand>
</feature>
<feature type="binding site" evidence="1">
    <location>
        <position position="426"/>
    </location>
    <ligand>
        <name>Zn(2+)</name>
        <dbReference type="ChEBI" id="CHEBI:29105"/>
        <note>catalytic</note>
    </ligand>
</feature>
<feature type="binding site" evidence="1">
    <location>
        <position position="430"/>
    </location>
    <ligand>
        <name>Zn(2+)</name>
        <dbReference type="ChEBI" id="CHEBI:29105"/>
        <note>catalytic</note>
    </ligand>
</feature>
<feature type="binding site" evidence="1">
    <location>
        <position position="503"/>
    </location>
    <ligand>
        <name>Zn(2+)</name>
        <dbReference type="ChEBI" id="CHEBI:29105"/>
        <note>catalytic</note>
    </ligand>
</feature>
<accession>A9GRC9</accession>
<keyword id="KW-0067">ATP-binding</keyword>
<keyword id="KW-0997">Cell inner membrane</keyword>
<keyword id="KW-1003">Cell membrane</keyword>
<keyword id="KW-0378">Hydrolase</keyword>
<keyword id="KW-0472">Membrane</keyword>
<keyword id="KW-0479">Metal-binding</keyword>
<keyword id="KW-0482">Metalloprotease</keyword>
<keyword id="KW-0547">Nucleotide-binding</keyword>
<keyword id="KW-0645">Protease</keyword>
<keyword id="KW-1185">Reference proteome</keyword>
<keyword id="KW-0812">Transmembrane</keyword>
<keyword id="KW-1133">Transmembrane helix</keyword>
<keyword id="KW-0862">Zinc</keyword>
<sequence>MADEKRPASRAWLGYLLIAVGILVLSGIVRSRGRPLVPYDEAVAEVRRGEISAAIVKPDEIELVRRESPQRPEERVRVTRLPGVEDEPLVRALLDKQVRIEAKSPQTSVWMQVAIWMLPLVLINAAFFMMLRRAGQGAGGPLGFLRSKAKIYDRSRQDPVRFSDVAGVDEAKDELVEVVDFLKEPSRYRSLGGRIPRGLLLIGPPGTGKTLLARAVAGEANVPFFSLNASEFVEMFVGLGAARVRELFEEARKSAPSIVFIDEIDAVGRTRGGLGALATHDEREQTLHQLLAELDGFDARTTVILMAATNRPEVLDPALLRPGRFDRQVIVDRPDLRGREAILAVHARRVPLASGVDLGLVARRTPGMVGADLAKIVNEAALAGARRGAREIGQADFDEALDRSQLGLRRRGQIMTAEERRRVAYHEAGHALVALALPAADPVERVSIVARTIGALGVTIQVPRDERQLVTEQEIESRVTVMLGGRAAEELALGQVSSGAHDDLGRATALVREMVTRLGMSRRLGLAALARTVGAPMLGVLQEERTCSEATAREVDEEVRERLGEMYLKAKQLLVDRREGLEAVAEALVLKETLRGEELEEIAAVSTRRKIAVGPPSAA</sequence>
<comment type="function">
    <text evidence="1">Acts as a processive, ATP-dependent zinc metallopeptidase for both cytoplasmic and membrane proteins. Plays a role in the quality control of integral membrane proteins.</text>
</comment>
<comment type="cofactor">
    <cofactor evidence="1">
        <name>Zn(2+)</name>
        <dbReference type="ChEBI" id="CHEBI:29105"/>
    </cofactor>
    <text evidence="1">Binds 1 zinc ion per subunit.</text>
</comment>
<comment type="subunit">
    <text evidence="1">Homohexamer.</text>
</comment>
<comment type="subcellular location">
    <subcellularLocation>
        <location evidence="1">Cell inner membrane</location>
        <topology evidence="1">Multi-pass membrane protein</topology>
        <orientation evidence="1">Cytoplasmic side</orientation>
    </subcellularLocation>
</comment>
<comment type="similarity">
    <text evidence="1">In the central section; belongs to the AAA ATPase family.</text>
</comment>
<comment type="similarity">
    <text evidence="1">In the C-terminal section; belongs to the peptidase M41 family.</text>
</comment>
<name>FTSH1_SORC5</name>
<protein>
    <recommendedName>
        <fullName evidence="1">ATP-dependent zinc metalloprotease FtsH 1</fullName>
        <ecNumber evidence="1">3.4.24.-</ecNumber>
    </recommendedName>
</protein>
<reference key="1">
    <citation type="journal article" date="2007" name="Nat. Biotechnol.">
        <title>Complete genome sequence of the myxobacterium Sorangium cellulosum.</title>
        <authorList>
            <person name="Schneiker S."/>
            <person name="Perlova O."/>
            <person name="Kaiser O."/>
            <person name="Gerth K."/>
            <person name="Alici A."/>
            <person name="Altmeyer M.O."/>
            <person name="Bartels D."/>
            <person name="Bekel T."/>
            <person name="Beyer S."/>
            <person name="Bode E."/>
            <person name="Bode H.B."/>
            <person name="Bolten C.J."/>
            <person name="Choudhuri J.V."/>
            <person name="Doss S."/>
            <person name="Elnakady Y.A."/>
            <person name="Frank B."/>
            <person name="Gaigalat L."/>
            <person name="Goesmann A."/>
            <person name="Groeger C."/>
            <person name="Gross F."/>
            <person name="Jelsbak L."/>
            <person name="Jelsbak L."/>
            <person name="Kalinowski J."/>
            <person name="Kegler C."/>
            <person name="Knauber T."/>
            <person name="Konietzny S."/>
            <person name="Kopp M."/>
            <person name="Krause L."/>
            <person name="Krug D."/>
            <person name="Linke B."/>
            <person name="Mahmud T."/>
            <person name="Martinez-Arias R."/>
            <person name="McHardy A.C."/>
            <person name="Merai M."/>
            <person name="Meyer F."/>
            <person name="Mormann S."/>
            <person name="Munoz-Dorado J."/>
            <person name="Perez J."/>
            <person name="Pradella S."/>
            <person name="Rachid S."/>
            <person name="Raddatz G."/>
            <person name="Rosenau F."/>
            <person name="Rueckert C."/>
            <person name="Sasse F."/>
            <person name="Scharfe M."/>
            <person name="Schuster S.C."/>
            <person name="Suen G."/>
            <person name="Treuner-Lange A."/>
            <person name="Velicer G.J."/>
            <person name="Vorholter F.-J."/>
            <person name="Weissman K.J."/>
            <person name="Welch R.D."/>
            <person name="Wenzel S.C."/>
            <person name="Whitworth D.E."/>
            <person name="Wilhelm S."/>
            <person name="Wittmann C."/>
            <person name="Bloecker H."/>
            <person name="Puehler A."/>
            <person name="Mueller R."/>
        </authorList>
    </citation>
    <scope>NUCLEOTIDE SEQUENCE [LARGE SCALE GENOMIC DNA]</scope>
    <source>
        <strain>So ce56</strain>
    </source>
</reference>
<organism>
    <name type="scientific">Sorangium cellulosum (strain So ce56)</name>
    <name type="common">Polyangium cellulosum (strain So ce56)</name>
    <dbReference type="NCBI Taxonomy" id="448385"/>
    <lineage>
        <taxon>Bacteria</taxon>
        <taxon>Pseudomonadati</taxon>
        <taxon>Myxococcota</taxon>
        <taxon>Polyangia</taxon>
        <taxon>Polyangiales</taxon>
        <taxon>Polyangiaceae</taxon>
        <taxon>Sorangium</taxon>
    </lineage>
</organism>